<evidence type="ECO:0000255" key="1">
    <source>
        <dbReference type="HAMAP-Rule" id="MF_00515"/>
    </source>
</evidence>
<keyword id="KW-0274">FAD</keyword>
<keyword id="KW-0285">Flavoprotein</keyword>
<keyword id="KW-0560">Oxidoreductase</keyword>
<comment type="function">
    <text evidence="1">Catalyzes the oxidative demethylation of N-methyl-L-tryptophan.</text>
</comment>
<comment type="catalytic activity">
    <reaction evidence="1">
        <text>N(alpha)-methyl-L-tryptophan + O2 + H2O = L-tryptophan + formaldehyde + H2O2</text>
        <dbReference type="Rhea" id="RHEA:28006"/>
        <dbReference type="ChEBI" id="CHEBI:15377"/>
        <dbReference type="ChEBI" id="CHEBI:15379"/>
        <dbReference type="ChEBI" id="CHEBI:16240"/>
        <dbReference type="ChEBI" id="CHEBI:16842"/>
        <dbReference type="ChEBI" id="CHEBI:57283"/>
        <dbReference type="ChEBI" id="CHEBI:57912"/>
    </reaction>
</comment>
<comment type="cofactor">
    <cofactor evidence="1">
        <name>FAD</name>
        <dbReference type="ChEBI" id="CHEBI:57692"/>
    </cofactor>
    <text evidence="1">Binds 1 FAD per subunit.</text>
</comment>
<comment type="subunit">
    <text evidence="1">Monomer.</text>
</comment>
<comment type="similarity">
    <text evidence="1">Belongs to the MSOX/MTOX family. MTOX subfamily.</text>
</comment>
<feature type="chain" id="PRO_1000206630" description="N-methyl-L-tryptophan oxidase">
    <location>
        <begin position="1"/>
        <end position="372"/>
    </location>
</feature>
<feature type="binding site" evidence="1">
    <location>
        <begin position="4"/>
        <end position="34"/>
    </location>
    <ligand>
        <name>FAD</name>
        <dbReference type="ChEBI" id="CHEBI:57692"/>
    </ligand>
</feature>
<feature type="modified residue" description="S-8alpha-FAD cysteine" evidence="1">
    <location>
        <position position="308"/>
    </location>
</feature>
<dbReference type="EC" id="1.5.3.-" evidence="1"/>
<dbReference type="EMBL" id="CP001396">
    <property type="protein sequence ID" value="ACR63915.1"/>
    <property type="molecule type" value="Genomic_DNA"/>
</dbReference>
<dbReference type="RefSeq" id="WP_000872833.1">
    <property type="nucleotide sequence ID" value="NC_012759.1"/>
</dbReference>
<dbReference type="SMR" id="C4ZRZ9"/>
<dbReference type="GeneID" id="75203646"/>
<dbReference type="KEGG" id="ebw:BWG_0907"/>
<dbReference type="HOGENOM" id="CLU_007884_2_1_6"/>
<dbReference type="GO" id="GO:0005829">
    <property type="term" value="C:cytosol"/>
    <property type="evidence" value="ECO:0007669"/>
    <property type="project" value="TreeGrafter"/>
</dbReference>
<dbReference type="GO" id="GO:0050660">
    <property type="term" value="F:flavin adenine dinucleotide binding"/>
    <property type="evidence" value="ECO:0007669"/>
    <property type="project" value="InterPro"/>
</dbReference>
<dbReference type="GO" id="GO:0050131">
    <property type="term" value="F:N-methyl-L-amino-acid oxidase activity"/>
    <property type="evidence" value="ECO:0007669"/>
    <property type="project" value="InterPro"/>
</dbReference>
<dbReference type="GO" id="GO:0008115">
    <property type="term" value="F:sarcosine oxidase activity"/>
    <property type="evidence" value="ECO:0007669"/>
    <property type="project" value="TreeGrafter"/>
</dbReference>
<dbReference type="Gene3D" id="3.30.9.10">
    <property type="entry name" value="D-Amino Acid Oxidase, subunit A, domain 2"/>
    <property type="match status" value="1"/>
</dbReference>
<dbReference type="Gene3D" id="3.50.50.60">
    <property type="entry name" value="FAD/NAD(P)-binding domain"/>
    <property type="match status" value="1"/>
</dbReference>
<dbReference type="HAMAP" id="MF_00515">
    <property type="entry name" value="MTOX"/>
    <property type="match status" value="1"/>
</dbReference>
<dbReference type="InterPro" id="IPR006076">
    <property type="entry name" value="FAD-dep_OxRdtase"/>
</dbReference>
<dbReference type="InterPro" id="IPR036188">
    <property type="entry name" value="FAD/NAD-bd_sf"/>
</dbReference>
<dbReference type="InterPro" id="IPR023493">
    <property type="entry name" value="Me_Trp_Oxase_MTOX"/>
</dbReference>
<dbReference type="InterPro" id="IPR045170">
    <property type="entry name" value="MTOX"/>
</dbReference>
<dbReference type="NCBIfam" id="NF008425">
    <property type="entry name" value="PRK11259.1"/>
    <property type="match status" value="1"/>
</dbReference>
<dbReference type="PANTHER" id="PTHR10961:SF7">
    <property type="entry name" value="FAD DEPENDENT OXIDOREDUCTASE DOMAIN-CONTAINING PROTEIN"/>
    <property type="match status" value="1"/>
</dbReference>
<dbReference type="PANTHER" id="PTHR10961">
    <property type="entry name" value="PEROXISOMAL SARCOSINE OXIDASE"/>
    <property type="match status" value="1"/>
</dbReference>
<dbReference type="Pfam" id="PF01266">
    <property type="entry name" value="DAO"/>
    <property type="match status" value="1"/>
</dbReference>
<dbReference type="SUPFAM" id="SSF54373">
    <property type="entry name" value="FAD-linked reductases, C-terminal domain"/>
    <property type="match status" value="1"/>
</dbReference>
<dbReference type="SUPFAM" id="SSF51905">
    <property type="entry name" value="FAD/NAD(P)-binding domain"/>
    <property type="match status" value="1"/>
</dbReference>
<accession>C4ZRZ9</accession>
<proteinExistence type="inferred from homology"/>
<sequence>MKYDLIIIGSGSVGAAAGYYATRAGLNVLMTDAHMPPHQHGSHHGDTRLIRHAYGEGEKYVPLVLRAQTLWDELSRHNEEDPIFVRSGVINLGPADSTFLANVAHSAEQWQLNVEKLDAQGIMARWPEIRVPDNYIGLFETDSGFLRSELAIKTWIQLAKEAGCAQLFNCPVTAIRHDDDGVTIETADGEYQAKKAIVCAGTWVKDLLPELPVQPVRKVFAWYQADGRYSVKNKFPAFTGELPNGDQYYGFPAENDALKIGKHNGGQVIHSADERVPFAEVASDGSEAFPFLRNVLPGIGCCLYGAACTYDNSPDEDFIIDTLPGHDNTLLITGLSGHGFKFASVLGEIAADFAQDKKSDFDLTPFRLSRFQ</sequence>
<name>MTOX_ECOBW</name>
<gene>
    <name evidence="1" type="primary">solA</name>
    <name type="ordered locus">BWG_0907</name>
</gene>
<reference key="1">
    <citation type="journal article" date="2009" name="J. Bacteriol.">
        <title>Genomic sequencing reveals regulatory mutations and recombinational events in the widely used MC4100 lineage of Escherichia coli K-12.</title>
        <authorList>
            <person name="Ferenci T."/>
            <person name="Zhou Z."/>
            <person name="Betteridge T."/>
            <person name="Ren Y."/>
            <person name="Liu Y."/>
            <person name="Feng L."/>
            <person name="Reeves P.R."/>
            <person name="Wang L."/>
        </authorList>
    </citation>
    <scope>NUCLEOTIDE SEQUENCE [LARGE SCALE GENOMIC DNA]</scope>
    <source>
        <strain>K12 / MC4100 / BW2952</strain>
    </source>
</reference>
<protein>
    <recommendedName>
        <fullName evidence="1">N-methyl-L-tryptophan oxidase</fullName>
        <shortName evidence="1">MTOX</shortName>
        <ecNumber evidence="1">1.5.3.-</ecNumber>
    </recommendedName>
</protein>
<organism>
    <name type="scientific">Escherichia coli (strain K12 / MC4100 / BW2952)</name>
    <dbReference type="NCBI Taxonomy" id="595496"/>
    <lineage>
        <taxon>Bacteria</taxon>
        <taxon>Pseudomonadati</taxon>
        <taxon>Pseudomonadota</taxon>
        <taxon>Gammaproteobacteria</taxon>
        <taxon>Enterobacterales</taxon>
        <taxon>Enterobacteriaceae</taxon>
        <taxon>Escherichia</taxon>
    </lineage>
</organism>